<evidence type="ECO:0000255" key="1">
    <source>
        <dbReference type="HAMAP-Rule" id="MF_00111"/>
    </source>
</evidence>
<sequence>MDKIVIKGGNKLTGEVKVEGAKNAVLPILTASLLASDKPSKLVNVPALSDVETINNVLTTLNADVTYKKDENAVVVDATKTLNEEAPYEYVSKMRASILVMGPLLARLGHAIVALPGGCAIGSRPIEQHIKGFEALGAEIHLENGNIYANAKDGLKGTSIHLDFPSVGATQNIIMAASLAKGKTLIENAAKEPEIVDLANYINEMGGRITGAGTDTITINGVESLHGVEHAIIPDRIEAGTLLIAGAITRGDIFVRGAIKEHMASLVYKLEEMGVELDYQEDGIRVRAEGELQPVDIKTLPHPGFPTDMQSQMMALLLTANGHKVVTETVFENRFMHVAEFKRMNANINVEGRSAKLEGKSQLQGAQVKATDLRAAAALILAGLVADGKTSVTELTHLDRGYVDLHGKLKQLGADIERIND</sequence>
<comment type="function">
    <text evidence="1">Cell wall formation. Adds enolpyruvyl to UDP-N-acetylglucosamine.</text>
</comment>
<comment type="catalytic activity">
    <reaction evidence="1">
        <text>phosphoenolpyruvate + UDP-N-acetyl-alpha-D-glucosamine = UDP-N-acetyl-3-O-(1-carboxyvinyl)-alpha-D-glucosamine + phosphate</text>
        <dbReference type="Rhea" id="RHEA:18681"/>
        <dbReference type="ChEBI" id="CHEBI:43474"/>
        <dbReference type="ChEBI" id="CHEBI:57705"/>
        <dbReference type="ChEBI" id="CHEBI:58702"/>
        <dbReference type="ChEBI" id="CHEBI:68483"/>
        <dbReference type="EC" id="2.5.1.7"/>
    </reaction>
</comment>
<comment type="pathway">
    <text evidence="1">Cell wall biogenesis; peptidoglycan biosynthesis.</text>
</comment>
<comment type="subcellular location">
    <subcellularLocation>
        <location evidence="1">Cytoplasm</location>
    </subcellularLocation>
</comment>
<comment type="similarity">
    <text evidence="1">Belongs to the EPSP synthase family. MurA subfamily.</text>
</comment>
<protein>
    <recommendedName>
        <fullName evidence="1">UDP-N-acetylglucosamine 1-carboxyvinyltransferase 1</fullName>
        <ecNumber evidence="1">2.5.1.7</ecNumber>
    </recommendedName>
    <alternativeName>
        <fullName evidence="1">Enoylpyruvate transferase 1</fullName>
    </alternativeName>
    <alternativeName>
        <fullName evidence="1">UDP-N-acetylglucosamine enolpyruvyl transferase 1</fullName>
        <shortName evidence="1">EPT 1</shortName>
    </alternativeName>
</protein>
<gene>
    <name evidence="1" type="primary">murA1</name>
    <name type="synonym">murA</name>
    <name type="ordered locus">SAV2099</name>
</gene>
<proteinExistence type="inferred from homology"/>
<reference key="1">
    <citation type="journal article" date="2001" name="Lancet">
        <title>Whole genome sequencing of meticillin-resistant Staphylococcus aureus.</title>
        <authorList>
            <person name="Kuroda M."/>
            <person name="Ohta T."/>
            <person name="Uchiyama I."/>
            <person name="Baba T."/>
            <person name="Yuzawa H."/>
            <person name="Kobayashi I."/>
            <person name="Cui L."/>
            <person name="Oguchi A."/>
            <person name="Aoki K."/>
            <person name="Nagai Y."/>
            <person name="Lian J.-Q."/>
            <person name="Ito T."/>
            <person name="Kanamori M."/>
            <person name="Matsumaru H."/>
            <person name="Maruyama A."/>
            <person name="Murakami H."/>
            <person name="Hosoyama A."/>
            <person name="Mizutani-Ui Y."/>
            <person name="Takahashi N.K."/>
            <person name="Sawano T."/>
            <person name="Inoue R."/>
            <person name="Kaito C."/>
            <person name="Sekimizu K."/>
            <person name="Hirakawa H."/>
            <person name="Kuhara S."/>
            <person name="Goto S."/>
            <person name="Yabuzaki J."/>
            <person name="Kanehisa M."/>
            <person name="Yamashita A."/>
            <person name="Oshima K."/>
            <person name="Furuya K."/>
            <person name="Yoshino C."/>
            <person name="Shiba T."/>
            <person name="Hattori M."/>
            <person name="Ogasawara N."/>
            <person name="Hayashi H."/>
            <person name="Hiramatsu K."/>
        </authorList>
    </citation>
    <scope>NUCLEOTIDE SEQUENCE [LARGE SCALE GENOMIC DNA]</scope>
    <source>
        <strain>Mu50 / ATCC 700699</strain>
    </source>
</reference>
<reference key="2">
    <citation type="journal article" date="2004" name="DNA Res.">
        <title>Nucleotide substitutions in Staphylococcus aureus strains, Mu50, Mu3, and N315.</title>
        <authorList>
            <person name="Ohta T."/>
            <person name="Hirakawa H."/>
            <person name="Morikawa K."/>
            <person name="Maruyama A."/>
            <person name="Inose Y."/>
            <person name="Yamashita A."/>
            <person name="Oshima K."/>
            <person name="Kuroda M."/>
            <person name="Hattori M."/>
            <person name="Hiramatsu K."/>
            <person name="Kuhara S."/>
            <person name="Hayashi H."/>
        </authorList>
    </citation>
    <scope>SEQUENCE REVISION</scope>
</reference>
<keyword id="KW-0131">Cell cycle</keyword>
<keyword id="KW-0132">Cell division</keyword>
<keyword id="KW-0133">Cell shape</keyword>
<keyword id="KW-0961">Cell wall biogenesis/degradation</keyword>
<keyword id="KW-0963">Cytoplasm</keyword>
<keyword id="KW-0573">Peptidoglycan synthesis</keyword>
<keyword id="KW-0670">Pyruvate</keyword>
<keyword id="KW-0808">Transferase</keyword>
<accession>Q931H5</accession>
<accession>Q931H4</accession>
<accession>Q99SF8</accession>
<dbReference type="EC" id="2.5.1.7" evidence="1"/>
<dbReference type="EMBL" id="BA000017">
    <property type="protein sequence ID" value="BAB58261.2"/>
    <property type="molecule type" value="Genomic_DNA"/>
</dbReference>
<dbReference type="RefSeq" id="WP_000358006.1">
    <property type="nucleotide sequence ID" value="NC_002758.2"/>
</dbReference>
<dbReference type="SMR" id="Q931H5"/>
<dbReference type="KEGG" id="sav:SAV2099"/>
<dbReference type="HOGENOM" id="CLU_027387_0_0_9"/>
<dbReference type="PhylomeDB" id="Q931H5"/>
<dbReference type="SABIO-RK" id="Q931H5"/>
<dbReference type="UniPathway" id="UPA00219"/>
<dbReference type="Proteomes" id="UP000002481">
    <property type="component" value="Chromosome"/>
</dbReference>
<dbReference type="GO" id="GO:0005737">
    <property type="term" value="C:cytoplasm"/>
    <property type="evidence" value="ECO:0007669"/>
    <property type="project" value="UniProtKB-SubCell"/>
</dbReference>
<dbReference type="GO" id="GO:0008760">
    <property type="term" value="F:UDP-N-acetylglucosamine 1-carboxyvinyltransferase activity"/>
    <property type="evidence" value="ECO:0007669"/>
    <property type="project" value="UniProtKB-UniRule"/>
</dbReference>
<dbReference type="GO" id="GO:0051301">
    <property type="term" value="P:cell division"/>
    <property type="evidence" value="ECO:0007669"/>
    <property type="project" value="UniProtKB-KW"/>
</dbReference>
<dbReference type="GO" id="GO:0071555">
    <property type="term" value="P:cell wall organization"/>
    <property type="evidence" value="ECO:0007669"/>
    <property type="project" value="UniProtKB-KW"/>
</dbReference>
<dbReference type="GO" id="GO:0009252">
    <property type="term" value="P:peptidoglycan biosynthetic process"/>
    <property type="evidence" value="ECO:0007669"/>
    <property type="project" value="UniProtKB-UniRule"/>
</dbReference>
<dbReference type="GO" id="GO:0008360">
    <property type="term" value="P:regulation of cell shape"/>
    <property type="evidence" value="ECO:0007669"/>
    <property type="project" value="UniProtKB-KW"/>
</dbReference>
<dbReference type="GO" id="GO:0019277">
    <property type="term" value="P:UDP-N-acetylgalactosamine biosynthetic process"/>
    <property type="evidence" value="ECO:0007669"/>
    <property type="project" value="InterPro"/>
</dbReference>
<dbReference type="CDD" id="cd01555">
    <property type="entry name" value="UdpNAET"/>
    <property type="match status" value="1"/>
</dbReference>
<dbReference type="FunFam" id="3.65.10.10:FF:000001">
    <property type="entry name" value="UDP-N-acetylglucosamine 1-carboxyvinyltransferase"/>
    <property type="match status" value="1"/>
</dbReference>
<dbReference type="Gene3D" id="3.65.10.10">
    <property type="entry name" value="Enolpyruvate transferase domain"/>
    <property type="match status" value="2"/>
</dbReference>
<dbReference type="HAMAP" id="MF_00111">
    <property type="entry name" value="MurA"/>
    <property type="match status" value="1"/>
</dbReference>
<dbReference type="InterPro" id="IPR001986">
    <property type="entry name" value="Enolpyruvate_Tfrase_dom"/>
</dbReference>
<dbReference type="InterPro" id="IPR036968">
    <property type="entry name" value="Enolpyruvate_Tfrase_sf"/>
</dbReference>
<dbReference type="InterPro" id="IPR050068">
    <property type="entry name" value="MurA_subfamily"/>
</dbReference>
<dbReference type="InterPro" id="IPR013792">
    <property type="entry name" value="RNA3'P_cycl/enolpyr_Trfase_a/b"/>
</dbReference>
<dbReference type="InterPro" id="IPR005750">
    <property type="entry name" value="UDP_GlcNAc_COvinyl_MurA"/>
</dbReference>
<dbReference type="NCBIfam" id="TIGR01072">
    <property type="entry name" value="murA"/>
    <property type="match status" value="1"/>
</dbReference>
<dbReference type="NCBIfam" id="NF006873">
    <property type="entry name" value="PRK09369.1"/>
    <property type="match status" value="1"/>
</dbReference>
<dbReference type="PANTHER" id="PTHR43783">
    <property type="entry name" value="UDP-N-ACETYLGLUCOSAMINE 1-CARBOXYVINYLTRANSFERASE"/>
    <property type="match status" value="1"/>
</dbReference>
<dbReference type="PANTHER" id="PTHR43783:SF1">
    <property type="entry name" value="UDP-N-ACETYLGLUCOSAMINE 1-CARBOXYVINYLTRANSFERASE"/>
    <property type="match status" value="1"/>
</dbReference>
<dbReference type="Pfam" id="PF00275">
    <property type="entry name" value="EPSP_synthase"/>
    <property type="match status" value="1"/>
</dbReference>
<dbReference type="SUPFAM" id="SSF55205">
    <property type="entry name" value="EPT/RTPC-like"/>
    <property type="match status" value="1"/>
</dbReference>
<organism>
    <name type="scientific">Staphylococcus aureus (strain Mu50 / ATCC 700699)</name>
    <dbReference type="NCBI Taxonomy" id="158878"/>
    <lineage>
        <taxon>Bacteria</taxon>
        <taxon>Bacillati</taxon>
        <taxon>Bacillota</taxon>
        <taxon>Bacilli</taxon>
        <taxon>Bacillales</taxon>
        <taxon>Staphylococcaceae</taxon>
        <taxon>Staphylococcus</taxon>
    </lineage>
</organism>
<feature type="chain" id="PRO_0000178916" description="UDP-N-acetylglucosamine 1-carboxyvinyltransferase 1">
    <location>
        <begin position="1"/>
        <end position="421"/>
    </location>
</feature>
<feature type="active site" description="Proton donor" evidence="1">
    <location>
        <position position="119"/>
    </location>
</feature>
<feature type="binding site" evidence="1">
    <location>
        <begin position="22"/>
        <end position="23"/>
    </location>
    <ligand>
        <name>phosphoenolpyruvate</name>
        <dbReference type="ChEBI" id="CHEBI:58702"/>
    </ligand>
</feature>
<feature type="binding site" evidence="1">
    <location>
        <position position="95"/>
    </location>
    <ligand>
        <name>UDP-N-acetyl-alpha-D-glucosamine</name>
        <dbReference type="ChEBI" id="CHEBI:57705"/>
    </ligand>
</feature>
<feature type="binding site" evidence="1">
    <location>
        <begin position="124"/>
        <end position="128"/>
    </location>
    <ligand>
        <name>UDP-N-acetyl-alpha-D-glucosamine</name>
        <dbReference type="ChEBI" id="CHEBI:57705"/>
    </ligand>
</feature>
<feature type="binding site" evidence="1">
    <location>
        <position position="308"/>
    </location>
    <ligand>
        <name>UDP-N-acetyl-alpha-D-glucosamine</name>
        <dbReference type="ChEBI" id="CHEBI:57705"/>
    </ligand>
</feature>
<feature type="binding site" evidence="1">
    <location>
        <position position="330"/>
    </location>
    <ligand>
        <name>UDP-N-acetyl-alpha-D-glucosamine</name>
        <dbReference type="ChEBI" id="CHEBI:57705"/>
    </ligand>
</feature>
<feature type="modified residue" description="2-(S-cysteinyl)pyruvic acid O-phosphothioketal" evidence="1">
    <location>
        <position position="119"/>
    </location>
</feature>
<name>MURA1_STAAM</name>